<evidence type="ECO:0000255" key="1">
    <source>
        <dbReference type="HAMAP-Rule" id="MF_00391"/>
    </source>
</evidence>
<evidence type="ECO:0000305" key="2"/>
<sequence length="44" mass="5167">MKRTYQPSKLVRKRRHGFRARMATVGGRKVIANRRSKGRKRLSA</sequence>
<dbReference type="EMBL" id="CP000394">
    <property type="protein sequence ID" value="ABI61621.1"/>
    <property type="molecule type" value="Genomic_DNA"/>
</dbReference>
<dbReference type="RefSeq" id="WP_011631430.1">
    <property type="nucleotide sequence ID" value="NC_008343.2"/>
</dbReference>
<dbReference type="SMR" id="Q0BU81"/>
<dbReference type="STRING" id="391165.GbCGDNIH1_0723"/>
<dbReference type="GeneID" id="69744976"/>
<dbReference type="KEGG" id="gbe:GbCGDNIH1_0723"/>
<dbReference type="eggNOG" id="COG0230">
    <property type="taxonomic scope" value="Bacteria"/>
</dbReference>
<dbReference type="HOGENOM" id="CLU_129938_2_0_5"/>
<dbReference type="OrthoDB" id="9804164at2"/>
<dbReference type="Proteomes" id="UP000001963">
    <property type="component" value="Chromosome"/>
</dbReference>
<dbReference type="GO" id="GO:1990904">
    <property type="term" value="C:ribonucleoprotein complex"/>
    <property type="evidence" value="ECO:0007669"/>
    <property type="project" value="UniProtKB-KW"/>
</dbReference>
<dbReference type="GO" id="GO:0005840">
    <property type="term" value="C:ribosome"/>
    <property type="evidence" value="ECO:0007669"/>
    <property type="project" value="UniProtKB-KW"/>
</dbReference>
<dbReference type="GO" id="GO:0003735">
    <property type="term" value="F:structural constituent of ribosome"/>
    <property type="evidence" value="ECO:0007669"/>
    <property type="project" value="InterPro"/>
</dbReference>
<dbReference type="GO" id="GO:0006412">
    <property type="term" value="P:translation"/>
    <property type="evidence" value="ECO:0007669"/>
    <property type="project" value="UniProtKB-UniRule"/>
</dbReference>
<dbReference type="FunFam" id="1.10.287.3980:FF:000001">
    <property type="entry name" value="Mitochondrial ribosomal protein L34"/>
    <property type="match status" value="1"/>
</dbReference>
<dbReference type="Gene3D" id="1.10.287.3980">
    <property type="match status" value="1"/>
</dbReference>
<dbReference type="HAMAP" id="MF_00391">
    <property type="entry name" value="Ribosomal_bL34"/>
    <property type="match status" value="1"/>
</dbReference>
<dbReference type="InterPro" id="IPR000271">
    <property type="entry name" value="Ribosomal_bL34"/>
</dbReference>
<dbReference type="InterPro" id="IPR020939">
    <property type="entry name" value="Ribosomal_bL34_CS"/>
</dbReference>
<dbReference type="NCBIfam" id="TIGR01030">
    <property type="entry name" value="rpmH_bact"/>
    <property type="match status" value="1"/>
</dbReference>
<dbReference type="PANTHER" id="PTHR14503:SF4">
    <property type="entry name" value="LARGE RIBOSOMAL SUBUNIT PROTEIN BL34M"/>
    <property type="match status" value="1"/>
</dbReference>
<dbReference type="PANTHER" id="PTHR14503">
    <property type="entry name" value="MITOCHONDRIAL RIBOSOMAL PROTEIN 34 FAMILY MEMBER"/>
    <property type="match status" value="1"/>
</dbReference>
<dbReference type="Pfam" id="PF00468">
    <property type="entry name" value="Ribosomal_L34"/>
    <property type="match status" value="1"/>
</dbReference>
<dbReference type="PROSITE" id="PS00784">
    <property type="entry name" value="RIBOSOMAL_L34"/>
    <property type="match status" value="1"/>
</dbReference>
<proteinExistence type="inferred from homology"/>
<feature type="chain" id="PRO_1000013346" description="Large ribosomal subunit protein bL34">
    <location>
        <begin position="1"/>
        <end position="44"/>
    </location>
</feature>
<name>RL34_GRABC</name>
<protein>
    <recommendedName>
        <fullName evidence="1">Large ribosomal subunit protein bL34</fullName>
    </recommendedName>
    <alternativeName>
        <fullName evidence="2">50S ribosomal protein L34</fullName>
    </alternativeName>
</protein>
<reference key="1">
    <citation type="journal article" date="2007" name="J. Bacteriol.">
        <title>Genome sequence analysis of the emerging human pathogenic acetic acid bacterium Granulibacter bethesdensis.</title>
        <authorList>
            <person name="Greenberg D.E."/>
            <person name="Porcella S.F."/>
            <person name="Zelazny A.M."/>
            <person name="Virtaneva K."/>
            <person name="Sturdevant D.E."/>
            <person name="Kupko J.J. III"/>
            <person name="Barbian K.D."/>
            <person name="Babar A."/>
            <person name="Dorward D.W."/>
            <person name="Holland S.M."/>
        </authorList>
    </citation>
    <scope>NUCLEOTIDE SEQUENCE [LARGE SCALE GENOMIC DNA]</scope>
    <source>
        <strain>ATCC BAA-1260 / CGDNIH1</strain>
    </source>
</reference>
<organism>
    <name type="scientific">Granulibacter bethesdensis (strain ATCC BAA-1260 / CGDNIH1)</name>
    <dbReference type="NCBI Taxonomy" id="391165"/>
    <lineage>
        <taxon>Bacteria</taxon>
        <taxon>Pseudomonadati</taxon>
        <taxon>Pseudomonadota</taxon>
        <taxon>Alphaproteobacteria</taxon>
        <taxon>Acetobacterales</taxon>
        <taxon>Acetobacteraceae</taxon>
        <taxon>Granulibacter</taxon>
    </lineage>
</organism>
<keyword id="KW-1185">Reference proteome</keyword>
<keyword id="KW-0687">Ribonucleoprotein</keyword>
<keyword id="KW-0689">Ribosomal protein</keyword>
<accession>Q0BU81</accession>
<gene>
    <name evidence="1" type="primary">rpmH</name>
    <name type="ordered locus">GbCGDNIH1_0723</name>
</gene>
<comment type="similarity">
    <text evidence="1">Belongs to the bacterial ribosomal protein bL34 family.</text>
</comment>